<proteinExistence type="evidence at protein level"/>
<keyword id="KW-0002">3D-structure</keyword>
<keyword id="KW-0025">Alternative splicing</keyword>
<keyword id="KW-0067">ATP-binding</keyword>
<keyword id="KW-0143">Chaperone</keyword>
<keyword id="KW-0963">Cytoplasm</keyword>
<keyword id="KW-0206">Cytoskeleton</keyword>
<keyword id="KW-0209">Deafness</keyword>
<keyword id="KW-0217">Developmental protein</keyword>
<keyword id="KW-0221">Differentiation</keyword>
<keyword id="KW-0225">Disease variant</keyword>
<keyword id="KW-0887">Epilepsy</keyword>
<keyword id="KW-0378">Hydrolase</keyword>
<keyword id="KW-0991">Intellectual disability</keyword>
<keyword id="KW-1017">Isopeptide bond</keyword>
<keyword id="KW-0496">Mitochondrion</keyword>
<keyword id="KW-0547">Nucleotide-binding</keyword>
<keyword id="KW-0597">Phosphoprotein</keyword>
<keyword id="KW-1267">Proteomics identification</keyword>
<keyword id="KW-1185">Reference proteome</keyword>
<keyword id="KW-0677">Repeat</keyword>
<keyword id="KW-0690">Ribosome biogenesis</keyword>
<keyword id="KW-0744">Spermatogenesis</keyword>
<keyword id="KW-0832">Ubl conjugation</keyword>
<reference key="1">
    <citation type="submission" date="2001-03" db="EMBL/GenBank/DDBJ databases">
        <title>Cloning and characterization of human SPAF, a new member of AAA-protein family associated with spermatogenesis and malignant conversion.</title>
        <authorList>
            <person name="Wang Z."/>
            <person name="Liu Y."/>
            <person name="Kulesz-Martin M.F."/>
        </authorList>
    </citation>
    <scope>NUCLEOTIDE SEQUENCE [MRNA] (ISOFORM 1)</scope>
</reference>
<reference key="2">
    <citation type="submission" date="2002-01" db="EMBL/GenBank/DDBJ databases">
        <title>Cloning and characterization of a novel hSPAF gene.</title>
        <authorList>
            <person name="Xu J."/>
            <person name="Wang L."/>
            <person name="Ye X."/>
            <person name="Zeng L."/>
            <person name="Xie Y."/>
            <person name="Mao Y."/>
        </authorList>
    </citation>
    <scope>NUCLEOTIDE SEQUENCE [MRNA] (ISOFORM 2)</scope>
</reference>
<reference key="3">
    <citation type="journal article" date="2004" name="Nat. Genet.">
        <title>Complete sequencing and characterization of 21,243 full-length human cDNAs.</title>
        <authorList>
            <person name="Ota T."/>
            <person name="Suzuki Y."/>
            <person name="Nishikawa T."/>
            <person name="Otsuki T."/>
            <person name="Sugiyama T."/>
            <person name="Irie R."/>
            <person name="Wakamatsu A."/>
            <person name="Hayashi K."/>
            <person name="Sato H."/>
            <person name="Nagai K."/>
            <person name="Kimura K."/>
            <person name="Makita H."/>
            <person name="Sekine M."/>
            <person name="Obayashi M."/>
            <person name="Nishi T."/>
            <person name="Shibahara T."/>
            <person name="Tanaka T."/>
            <person name="Ishii S."/>
            <person name="Yamamoto J."/>
            <person name="Saito K."/>
            <person name="Kawai Y."/>
            <person name="Isono Y."/>
            <person name="Nakamura Y."/>
            <person name="Nagahari K."/>
            <person name="Murakami K."/>
            <person name="Yasuda T."/>
            <person name="Iwayanagi T."/>
            <person name="Wagatsuma M."/>
            <person name="Shiratori A."/>
            <person name="Sudo H."/>
            <person name="Hosoiri T."/>
            <person name="Kaku Y."/>
            <person name="Kodaira H."/>
            <person name="Kondo H."/>
            <person name="Sugawara M."/>
            <person name="Takahashi M."/>
            <person name="Kanda K."/>
            <person name="Yokoi T."/>
            <person name="Furuya T."/>
            <person name="Kikkawa E."/>
            <person name="Omura Y."/>
            <person name="Abe K."/>
            <person name="Kamihara K."/>
            <person name="Katsuta N."/>
            <person name="Sato K."/>
            <person name="Tanikawa M."/>
            <person name="Yamazaki M."/>
            <person name="Ninomiya K."/>
            <person name="Ishibashi T."/>
            <person name="Yamashita H."/>
            <person name="Murakawa K."/>
            <person name="Fujimori K."/>
            <person name="Tanai H."/>
            <person name="Kimata M."/>
            <person name="Watanabe M."/>
            <person name="Hiraoka S."/>
            <person name="Chiba Y."/>
            <person name="Ishida S."/>
            <person name="Ono Y."/>
            <person name="Takiguchi S."/>
            <person name="Watanabe S."/>
            <person name="Yosida M."/>
            <person name="Hotuta T."/>
            <person name="Kusano J."/>
            <person name="Kanehori K."/>
            <person name="Takahashi-Fujii A."/>
            <person name="Hara H."/>
            <person name="Tanase T.-O."/>
            <person name="Nomura Y."/>
            <person name="Togiya S."/>
            <person name="Komai F."/>
            <person name="Hara R."/>
            <person name="Takeuchi K."/>
            <person name="Arita M."/>
            <person name="Imose N."/>
            <person name="Musashino K."/>
            <person name="Yuuki H."/>
            <person name="Oshima A."/>
            <person name="Sasaki N."/>
            <person name="Aotsuka S."/>
            <person name="Yoshikawa Y."/>
            <person name="Matsunawa H."/>
            <person name="Ichihara T."/>
            <person name="Shiohata N."/>
            <person name="Sano S."/>
            <person name="Moriya S."/>
            <person name="Momiyama H."/>
            <person name="Satoh N."/>
            <person name="Takami S."/>
            <person name="Terashima Y."/>
            <person name="Suzuki O."/>
            <person name="Nakagawa S."/>
            <person name="Senoh A."/>
            <person name="Mizoguchi H."/>
            <person name="Goto Y."/>
            <person name="Shimizu F."/>
            <person name="Wakebe H."/>
            <person name="Hishigaki H."/>
            <person name="Watanabe T."/>
            <person name="Sugiyama A."/>
            <person name="Takemoto M."/>
            <person name="Kawakami B."/>
            <person name="Yamazaki M."/>
            <person name="Watanabe K."/>
            <person name="Kumagai A."/>
            <person name="Itakura S."/>
            <person name="Fukuzumi Y."/>
            <person name="Fujimori Y."/>
            <person name="Komiyama M."/>
            <person name="Tashiro H."/>
            <person name="Tanigami A."/>
            <person name="Fujiwara T."/>
            <person name="Ono T."/>
            <person name="Yamada K."/>
            <person name="Fujii Y."/>
            <person name="Ozaki K."/>
            <person name="Hirao M."/>
            <person name="Ohmori Y."/>
            <person name="Kawabata A."/>
            <person name="Hikiji T."/>
            <person name="Kobatake N."/>
            <person name="Inagaki H."/>
            <person name="Ikema Y."/>
            <person name="Okamoto S."/>
            <person name="Okitani R."/>
            <person name="Kawakami T."/>
            <person name="Noguchi S."/>
            <person name="Itoh T."/>
            <person name="Shigeta K."/>
            <person name="Senba T."/>
            <person name="Matsumura K."/>
            <person name="Nakajima Y."/>
            <person name="Mizuno T."/>
            <person name="Morinaga M."/>
            <person name="Sasaki M."/>
            <person name="Togashi T."/>
            <person name="Oyama M."/>
            <person name="Hata H."/>
            <person name="Watanabe M."/>
            <person name="Komatsu T."/>
            <person name="Mizushima-Sugano J."/>
            <person name="Satoh T."/>
            <person name="Shirai Y."/>
            <person name="Takahashi Y."/>
            <person name="Nakagawa K."/>
            <person name="Okumura K."/>
            <person name="Nagase T."/>
            <person name="Nomura N."/>
            <person name="Kikuchi H."/>
            <person name="Masuho Y."/>
            <person name="Yamashita R."/>
            <person name="Nakai K."/>
            <person name="Yada T."/>
            <person name="Nakamura Y."/>
            <person name="Ohara O."/>
            <person name="Isogai T."/>
            <person name="Sugano S."/>
        </authorList>
    </citation>
    <scope>NUCLEOTIDE SEQUENCE [LARGE SCALE MRNA] (ISOFORM 1)</scope>
    <source>
        <tissue>Brain</tissue>
    </source>
</reference>
<reference key="4">
    <citation type="journal article" date="2005" name="Nature">
        <title>Generation and annotation of the DNA sequences of human chromosomes 2 and 4.</title>
        <authorList>
            <person name="Hillier L.W."/>
            <person name="Graves T.A."/>
            <person name="Fulton R.S."/>
            <person name="Fulton L.A."/>
            <person name="Pepin K.H."/>
            <person name="Minx P."/>
            <person name="Wagner-McPherson C."/>
            <person name="Layman D."/>
            <person name="Wylie K."/>
            <person name="Sekhon M."/>
            <person name="Becker M.C."/>
            <person name="Fewell G.A."/>
            <person name="Delehaunty K.D."/>
            <person name="Miner T.L."/>
            <person name="Nash W.E."/>
            <person name="Kremitzki C."/>
            <person name="Oddy L."/>
            <person name="Du H."/>
            <person name="Sun H."/>
            <person name="Bradshaw-Cordum H."/>
            <person name="Ali J."/>
            <person name="Carter J."/>
            <person name="Cordes M."/>
            <person name="Harris A."/>
            <person name="Isak A."/>
            <person name="van Brunt A."/>
            <person name="Nguyen C."/>
            <person name="Du F."/>
            <person name="Courtney L."/>
            <person name="Kalicki J."/>
            <person name="Ozersky P."/>
            <person name="Abbott S."/>
            <person name="Armstrong J."/>
            <person name="Belter E.A."/>
            <person name="Caruso L."/>
            <person name="Cedroni M."/>
            <person name="Cotton M."/>
            <person name="Davidson T."/>
            <person name="Desai A."/>
            <person name="Elliott G."/>
            <person name="Erb T."/>
            <person name="Fronick C."/>
            <person name="Gaige T."/>
            <person name="Haakenson W."/>
            <person name="Haglund K."/>
            <person name="Holmes A."/>
            <person name="Harkins R."/>
            <person name="Kim K."/>
            <person name="Kruchowski S.S."/>
            <person name="Strong C.M."/>
            <person name="Grewal N."/>
            <person name="Goyea E."/>
            <person name="Hou S."/>
            <person name="Levy A."/>
            <person name="Martinka S."/>
            <person name="Mead K."/>
            <person name="McLellan M.D."/>
            <person name="Meyer R."/>
            <person name="Randall-Maher J."/>
            <person name="Tomlinson C."/>
            <person name="Dauphin-Kohlberg S."/>
            <person name="Kozlowicz-Reilly A."/>
            <person name="Shah N."/>
            <person name="Swearengen-Shahid S."/>
            <person name="Snider J."/>
            <person name="Strong J.T."/>
            <person name="Thompson J."/>
            <person name="Yoakum M."/>
            <person name="Leonard S."/>
            <person name="Pearman C."/>
            <person name="Trani L."/>
            <person name="Radionenko M."/>
            <person name="Waligorski J.E."/>
            <person name="Wang C."/>
            <person name="Rock S.M."/>
            <person name="Tin-Wollam A.-M."/>
            <person name="Maupin R."/>
            <person name="Latreille P."/>
            <person name="Wendl M.C."/>
            <person name="Yang S.-P."/>
            <person name="Pohl C."/>
            <person name="Wallis J.W."/>
            <person name="Spieth J."/>
            <person name="Bieri T.A."/>
            <person name="Berkowicz N."/>
            <person name="Nelson J.O."/>
            <person name="Osborne J."/>
            <person name="Ding L."/>
            <person name="Meyer R."/>
            <person name="Sabo A."/>
            <person name="Shotland Y."/>
            <person name="Sinha P."/>
            <person name="Wohldmann P.E."/>
            <person name="Cook L.L."/>
            <person name="Hickenbotham M.T."/>
            <person name="Eldred J."/>
            <person name="Williams D."/>
            <person name="Jones T.A."/>
            <person name="She X."/>
            <person name="Ciccarelli F.D."/>
            <person name="Izaurralde E."/>
            <person name="Taylor J."/>
            <person name="Schmutz J."/>
            <person name="Myers R.M."/>
            <person name="Cox D.R."/>
            <person name="Huang X."/>
            <person name="McPherson J.D."/>
            <person name="Mardis E.R."/>
            <person name="Clifton S.W."/>
            <person name="Warren W.C."/>
            <person name="Chinwalla A.T."/>
            <person name="Eddy S.R."/>
            <person name="Marra M.A."/>
            <person name="Ovcharenko I."/>
            <person name="Furey T.S."/>
            <person name="Miller W."/>
            <person name="Eichler E.E."/>
            <person name="Bork P."/>
            <person name="Suyama M."/>
            <person name="Torrents D."/>
            <person name="Waterston R.H."/>
            <person name="Wilson R.K."/>
        </authorList>
    </citation>
    <scope>NUCLEOTIDE SEQUENCE [LARGE SCALE GENOMIC DNA]</scope>
</reference>
<reference key="5">
    <citation type="journal article" date="2004" name="Genome Res.">
        <title>The status, quality, and expansion of the NIH full-length cDNA project: the Mammalian Gene Collection (MGC).</title>
        <authorList>
            <consortium name="The MGC Project Team"/>
        </authorList>
    </citation>
    <scope>NUCLEOTIDE SEQUENCE [LARGE SCALE MRNA] (ISOFORM 3)</scope>
    <source>
        <tissue>Testis</tissue>
    </source>
</reference>
<reference key="6">
    <citation type="journal article" date="2008" name="J. Cell Sci.">
        <title>EML3 is a nuclear microtubule-binding protein required for the correct alignment of chromosomes in metaphase.</title>
        <authorList>
            <person name="Tegha-Dunghu J."/>
            <person name="Neumann B."/>
            <person name="Reber S."/>
            <person name="Krause R."/>
            <person name="Erfle H."/>
            <person name="Walter T."/>
            <person name="Held M."/>
            <person name="Rogers P."/>
            <person name="Hupfeld K."/>
            <person name="Ruppert T."/>
            <person name="Ellenberg J."/>
            <person name="Gruss O.J."/>
        </authorList>
    </citation>
    <scope>SUBCELLULAR LOCATION</scope>
</reference>
<reference key="7">
    <citation type="journal article" date="2010" name="Sci. Signal.">
        <title>Quantitative phosphoproteomics reveals widespread full phosphorylation site occupancy during mitosis.</title>
        <authorList>
            <person name="Olsen J.V."/>
            <person name="Vermeulen M."/>
            <person name="Santamaria A."/>
            <person name="Kumar C."/>
            <person name="Miller M.L."/>
            <person name="Jensen L.J."/>
            <person name="Gnad F."/>
            <person name="Cox J."/>
            <person name="Jensen T.S."/>
            <person name="Nigg E.A."/>
            <person name="Brunak S."/>
            <person name="Mann M."/>
        </authorList>
    </citation>
    <scope>PHOSPHORYLATION [LARGE SCALE ANALYSIS] AT THR-272; SER-274 AND SER-279</scope>
    <scope>IDENTIFICATION BY MASS SPECTROMETRY [LARGE SCALE ANALYSIS]</scope>
    <source>
        <tissue>Cervix carcinoma</tissue>
    </source>
</reference>
<reference key="8">
    <citation type="journal article" date="2011" name="BMC Syst. Biol.">
        <title>Initial characterization of the human central proteome.</title>
        <authorList>
            <person name="Burkard T.R."/>
            <person name="Planyavsky M."/>
            <person name="Kaupe I."/>
            <person name="Breitwieser F.P."/>
            <person name="Buerckstuemmer T."/>
            <person name="Bennett K.L."/>
            <person name="Superti-Furga G."/>
            <person name="Colinge J."/>
        </authorList>
    </citation>
    <scope>IDENTIFICATION BY MASS SPECTROMETRY [LARGE SCALE ANALYSIS]</scope>
</reference>
<reference key="9">
    <citation type="journal article" date="2013" name="J. Proteome Res.">
        <title>Toward a comprehensive characterization of a human cancer cell phosphoproteome.</title>
        <authorList>
            <person name="Zhou H."/>
            <person name="Di Palma S."/>
            <person name="Preisinger C."/>
            <person name="Peng M."/>
            <person name="Polat A.N."/>
            <person name="Heck A.J."/>
            <person name="Mohammed S."/>
        </authorList>
    </citation>
    <scope>IDENTIFICATION BY MASS SPECTROMETRY [LARGE SCALE ANALYSIS]</scope>
    <source>
        <tissue>Erythroleukemia</tissue>
    </source>
</reference>
<reference key="10">
    <citation type="journal article" date="2014" name="J. Proteomics">
        <title>An enzyme assisted RP-RPLC approach for in-depth analysis of human liver phosphoproteome.</title>
        <authorList>
            <person name="Bian Y."/>
            <person name="Song C."/>
            <person name="Cheng K."/>
            <person name="Dong M."/>
            <person name="Wang F."/>
            <person name="Huang J."/>
            <person name="Sun D."/>
            <person name="Wang L."/>
            <person name="Ye M."/>
            <person name="Zou H."/>
        </authorList>
    </citation>
    <scope>IDENTIFICATION BY MASS SPECTROMETRY [LARGE SCALE ANALYSIS]</scope>
    <source>
        <tissue>Liver</tissue>
    </source>
</reference>
<reference key="11">
    <citation type="journal article" date="2015" name="Am. J. Hum. Genet.">
        <title>Mutations in SPATA5 are associated with microcephaly, intellectual disability, seizures, and hearing loss.</title>
        <authorList>
            <person name="Tanaka A.J."/>
            <person name="Cho M.T."/>
            <person name="Millan F."/>
            <person name="Juusola J."/>
            <person name="Retterer K."/>
            <person name="Joshi C."/>
            <person name="Niyazov D."/>
            <person name="Garnica A."/>
            <person name="Gratz E."/>
            <person name="Deardorff M."/>
            <person name="Wilkins A."/>
            <person name="Ortiz-Gonzalez X."/>
            <person name="Mathews K."/>
            <person name="Panzer K."/>
            <person name="Brilstra E."/>
            <person name="van Gassen K.L."/>
            <person name="Volker-Touw C.M."/>
            <person name="van Binsbergen E."/>
            <person name="Sobreira N."/>
            <person name="Hamosh A."/>
            <person name="McKnight D."/>
            <person name="Monaghan K.G."/>
            <person name="Chung W.K."/>
        </authorList>
    </citation>
    <scope>INVOLVEMENT IN NEDHSB</scope>
    <scope>VARIANTS NEDHSB GLN-84; ILE-90; THR-100; THR-330 DEL; LEU-448; LEU-488; GLN-529; CYS-626; GLY-628; GLN-784 AND VAL-844</scope>
</reference>
<reference key="12">
    <citation type="journal article" date="2016" name="Clin. Genet.">
        <title>Characterization of SPATA5-related encephalopathy in early childhood.</title>
        <authorList>
            <person name="Kurata H."/>
            <person name="Terashima H."/>
            <person name="Nakashima M."/>
            <person name="Okazaki T."/>
            <person name="Matsumura W."/>
            <person name="Ohno K."/>
            <person name="Saito Y."/>
            <person name="Maegaki Y."/>
            <person name="Kubota M."/>
            <person name="Nanba E."/>
            <person name="Saitsu H."/>
            <person name="Matsumoto N."/>
            <person name="Kato M."/>
        </authorList>
    </citation>
    <scope>INVOLVEMENT IN NEDHSB</scope>
</reference>
<reference key="13">
    <citation type="journal article" date="2017" name="Nat. Struct. Mol. Biol.">
        <title>Site-specific mapping of the human SUMO proteome reveals co-modification with phosphorylation.</title>
        <authorList>
            <person name="Hendriks I.A."/>
            <person name="Lyon D."/>
            <person name="Young C."/>
            <person name="Jensen L.J."/>
            <person name="Vertegaal A.C."/>
            <person name="Nielsen M.L."/>
        </authorList>
    </citation>
    <scope>SUMOYLATION [LARGE SCALE ANALYSIS] AT LYS-859</scope>
    <scope>IDENTIFICATION BY MASS SPECTROMETRY [LARGE SCALE ANALYSIS]</scope>
</reference>
<reference key="14">
    <citation type="journal article" date="2022" name="Cell Rep.">
        <title>Labeling of heterochronic ribosomes reveals C1ORF109 and SPATA5 control a late step in human ribosome assembly.</title>
        <authorList>
            <person name="Ni C."/>
            <person name="Schmitz D.A."/>
            <person name="Lee J."/>
            <person name="Pawlowski K."/>
            <person name="Wu J."/>
            <person name="Buszczak M."/>
        </authorList>
    </citation>
    <scope>FUNCTION</scope>
    <scope>INTERACTION WITH AIRIM</scope>
    <scope>INTERACTION WITH PRE-60S RIBOSOMAL PARTICLES</scope>
    <scope>VARIANTS NEDHSB THR-330 DEL AND GLY-628</scope>
    <scope>CHARACTERIZATION OF VARIANTS NEDHSB THR-330 DEL AND GLY-628</scope>
</reference>
<reference key="15">
    <citation type="journal article" date="2024" name="Cell">
        <title>The SPATA5-SPATA5L1 ATPase complex directs replisome proteostasis to ensure genome integrity.</title>
        <authorList>
            <person name="Krishnamoorthy V."/>
            <person name="Foglizzo M."/>
            <person name="Dilley R.L."/>
            <person name="Wu A."/>
            <person name="Datta A."/>
            <person name="Dutta P."/>
            <person name="Campbell L.J."/>
            <person name="Degtjarik O."/>
            <person name="Musgrove L.J."/>
            <person name="Calabrese A.N."/>
            <person name="Zeqiraj E."/>
            <person name="Greenberg R.A."/>
        </authorList>
    </citation>
    <scope>FUNCTION</scope>
    <scope>SUBUNIT</scope>
    <scope>MUTAGENESIS OF GLY-185 AND PHE-323</scope>
    <scope>CHARACTERIZATION OF VARIANTS NEDHSB THR-100; THR-330 DEL; GLN-529; CYS-626 AND GLN-784</scope>
    <scope>CATALYTIC ACTIVITY</scope>
</reference>
<reference key="16">
    <citation type="journal article" date="2017" name="Adv. Exp. Med. Biol.">
        <title>Isolated hearing impairment caused by SPATA5 mutations in a family with variable phenotypic expression.</title>
        <authorList>
            <person name="Szczaluba K."/>
            <person name="Szymanska K."/>
            <person name="Kosinska J."/>
            <person name="Pollak A."/>
            <person name="Murcia V."/>
            <person name="Kedra A."/>
            <person name="Stawinski P."/>
            <person name="Rydzanicz M."/>
            <person name="Demkow U."/>
            <person name="Ploski R."/>
        </authorList>
    </citation>
    <scope>VARIANT NEDHSB THR-330 DEL</scope>
</reference>
<reference key="17">
    <citation type="journal article" date="2021" name="Int. J. Mol. Sci.">
        <title>Muscular and Molecular Pathology Associated with SPATA5 Deficiency in a Child with EHLMRS.</title>
        <authorList>
            <person name="Braun F."/>
            <person name="Hentschel A."/>
            <person name="Sickmann A."/>
            <person name="Marteau T."/>
            <person name="Hertel S."/>
            <person name="Foerster F."/>
            <person name="Prokisch H."/>
            <person name="Wagner M."/>
            <person name="Wortmann S."/>
            <person name="Della Marina A."/>
            <person name="Koelbel H."/>
            <person name="Roos A."/>
            <person name="Schara-Schmidt U."/>
        </authorList>
    </citation>
    <scope>VARIANTS NEDHSB 132-GLN--LEU-893 DEL AND THR-330 DEL</scope>
</reference>
<organism>
    <name type="scientific">Homo sapiens</name>
    <name type="common">Human</name>
    <dbReference type="NCBI Taxonomy" id="9606"/>
    <lineage>
        <taxon>Eukaryota</taxon>
        <taxon>Metazoa</taxon>
        <taxon>Chordata</taxon>
        <taxon>Craniata</taxon>
        <taxon>Vertebrata</taxon>
        <taxon>Euteleostomi</taxon>
        <taxon>Mammalia</taxon>
        <taxon>Eutheria</taxon>
        <taxon>Euarchontoglires</taxon>
        <taxon>Primates</taxon>
        <taxon>Haplorrhini</taxon>
        <taxon>Catarrhini</taxon>
        <taxon>Hominidae</taxon>
        <taxon>Homo</taxon>
    </lineage>
</organism>
<dbReference type="EC" id="3.6.4.10" evidence="1"/>
<dbReference type="EMBL" id="AF361489">
    <property type="protein sequence ID" value="AAM00262.1"/>
    <property type="molecule type" value="mRNA"/>
</dbReference>
<dbReference type="EMBL" id="AF479656">
    <property type="protein sequence ID" value="AAM43608.1"/>
    <property type="molecule type" value="mRNA"/>
</dbReference>
<dbReference type="EMBL" id="AK091384">
    <property type="protein sequence ID" value="BAC03651.1"/>
    <property type="molecule type" value="mRNA"/>
</dbReference>
<dbReference type="EMBL" id="AC021205">
    <property type="status" value="NOT_ANNOTATED_CDS"/>
    <property type="molecule type" value="Genomic_DNA"/>
</dbReference>
<dbReference type="EMBL" id="AC026402">
    <property type="status" value="NOT_ANNOTATED_CDS"/>
    <property type="molecule type" value="Genomic_DNA"/>
</dbReference>
<dbReference type="EMBL" id="AC097492">
    <property type="status" value="NOT_ANNOTATED_CDS"/>
    <property type="molecule type" value="Genomic_DNA"/>
</dbReference>
<dbReference type="EMBL" id="AC109357">
    <property type="status" value="NOT_ANNOTATED_CDS"/>
    <property type="molecule type" value="Genomic_DNA"/>
</dbReference>
<dbReference type="EMBL" id="BC048217">
    <property type="protein sequence ID" value="AAH48217.1"/>
    <property type="molecule type" value="mRNA"/>
</dbReference>
<dbReference type="CCDS" id="CCDS3730.1">
    <molecule id="Q8NB90-1"/>
</dbReference>
<dbReference type="RefSeq" id="NP_001304728.1">
    <property type="nucleotide sequence ID" value="NM_001317799.1"/>
</dbReference>
<dbReference type="RefSeq" id="NP_660208.2">
    <molecule id="Q8NB90-1"/>
    <property type="nucleotide sequence ID" value="NM_145207.3"/>
</dbReference>
<dbReference type="RefSeq" id="XP_011529981.1">
    <molecule id="Q8NB90-2"/>
    <property type="nucleotide sequence ID" value="XM_011531679.4"/>
</dbReference>
<dbReference type="RefSeq" id="XP_054205056.1">
    <molecule id="Q8NB90-2"/>
    <property type="nucleotide sequence ID" value="XM_054349081.1"/>
</dbReference>
<dbReference type="PDB" id="8RHN">
    <property type="method" value="EM"/>
    <property type="resolution" value="4.50 A"/>
    <property type="chains" value="E/F/G/H/K/L/M/N=1-893"/>
</dbReference>
<dbReference type="PDBsum" id="8RHN"/>
<dbReference type="EMDB" id="EMD-15778"/>
<dbReference type="EMDB" id="EMD-15846"/>
<dbReference type="EMDB" id="EMD-15847"/>
<dbReference type="EMDB" id="EMD-19177"/>
<dbReference type="SMR" id="Q8NB90"/>
<dbReference type="BioGRID" id="127927">
    <property type="interactions" value="126"/>
</dbReference>
<dbReference type="ComplexPortal" id="CPX-9182">
    <property type="entry name" value="SPATA5-SPATA5L1 ATPase complex"/>
</dbReference>
<dbReference type="FunCoup" id="Q8NB90">
    <property type="interactions" value="1409"/>
</dbReference>
<dbReference type="IntAct" id="Q8NB90">
    <property type="interactions" value="1087"/>
</dbReference>
<dbReference type="MINT" id="Q8NB90"/>
<dbReference type="STRING" id="9606.ENSP00000274008"/>
<dbReference type="ChEMBL" id="CHEMBL2311230"/>
<dbReference type="GlyGen" id="Q8NB90">
    <property type="glycosylation" value="1 site, 1 O-linked glycan (1 site)"/>
</dbReference>
<dbReference type="iPTMnet" id="Q8NB90"/>
<dbReference type="MetOSite" id="Q8NB90"/>
<dbReference type="PhosphoSitePlus" id="Q8NB90"/>
<dbReference type="BioMuta" id="SPATA5"/>
<dbReference type="DMDM" id="308153554"/>
<dbReference type="jPOST" id="Q8NB90"/>
<dbReference type="MassIVE" id="Q8NB90"/>
<dbReference type="PaxDb" id="9606-ENSP00000274008"/>
<dbReference type="PeptideAtlas" id="Q8NB90"/>
<dbReference type="ProteomicsDB" id="72749">
    <molecule id="Q8NB90-1"/>
</dbReference>
<dbReference type="ProteomicsDB" id="72750">
    <molecule id="Q8NB90-2"/>
</dbReference>
<dbReference type="ProteomicsDB" id="72751">
    <molecule id="Q8NB90-3"/>
</dbReference>
<dbReference type="Pumba" id="Q8NB90"/>
<dbReference type="Antibodypedia" id="26869">
    <property type="antibodies" value="50 antibodies from 19 providers"/>
</dbReference>
<dbReference type="DNASU" id="166378"/>
<dbReference type="Ensembl" id="ENST00000274008.5">
    <molecule id="Q8NB90-1"/>
    <property type="protein sequence ID" value="ENSP00000274008.3"/>
    <property type="gene ID" value="ENSG00000145375.9"/>
</dbReference>
<dbReference type="GeneID" id="166378"/>
<dbReference type="KEGG" id="hsa:166378"/>
<dbReference type="MANE-Select" id="ENST00000274008.5">
    <property type="protein sequence ID" value="ENSP00000274008.3"/>
    <property type="RefSeq nucleotide sequence ID" value="NM_145207.3"/>
    <property type="RefSeq protein sequence ID" value="NP_660208.2"/>
</dbReference>
<dbReference type="UCSC" id="uc003iez.5">
    <molecule id="Q8NB90-1"/>
    <property type="organism name" value="human"/>
</dbReference>
<dbReference type="AGR" id="HGNC:18119"/>
<dbReference type="CTD" id="166378"/>
<dbReference type="DisGeNET" id="166378"/>
<dbReference type="GeneCards" id="AFG2A"/>
<dbReference type="HGNC" id="HGNC:18119">
    <property type="gene designation" value="AFG2A"/>
</dbReference>
<dbReference type="HPA" id="ENSG00000145375">
    <property type="expression patterns" value="Low tissue specificity"/>
</dbReference>
<dbReference type="MalaCards" id="AFG2A"/>
<dbReference type="MIM" id="613940">
    <property type="type" value="gene"/>
</dbReference>
<dbReference type="MIM" id="616577">
    <property type="type" value="phenotype"/>
</dbReference>
<dbReference type="neXtProt" id="NX_Q8NB90"/>
<dbReference type="OpenTargets" id="ENSG00000145375"/>
<dbReference type="Orphanet" id="457351">
    <property type="disease" value="Microcephaly-intellectual disability-sensorineural hearing loss-epilepsy-abnormal muscle tone syndrome"/>
</dbReference>
<dbReference type="PharmGKB" id="PA38294"/>
<dbReference type="VEuPathDB" id="HostDB:ENSG00000145375"/>
<dbReference type="eggNOG" id="KOG0730">
    <property type="taxonomic scope" value="Eukaryota"/>
</dbReference>
<dbReference type="GeneTree" id="ENSGT00940000157323"/>
<dbReference type="HOGENOM" id="CLU_000688_10_0_1"/>
<dbReference type="InParanoid" id="Q8NB90"/>
<dbReference type="OrthoDB" id="27435at2759"/>
<dbReference type="PAN-GO" id="Q8NB90">
    <property type="GO annotations" value="2 GO annotations based on evolutionary models"/>
</dbReference>
<dbReference type="PhylomeDB" id="Q8NB90"/>
<dbReference type="TreeFam" id="TF314525"/>
<dbReference type="PathwayCommons" id="Q8NB90"/>
<dbReference type="SignaLink" id="Q8NB90"/>
<dbReference type="BioGRID-ORCS" id="166378">
    <property type="hits" value="696 hits in 1170 CRISPR screens"/>
</dbReference>
<dbReference type="ChiTaRS" id="SPATA5">
    <property type="organism name" value="human"/>
</dbReference>
<dbReference type="GeneWiki" id="SPATA5"/>
<dbReference type="GenomeRNAi" id="166378"/>
<dbReference type="Pharos" id="Q8NB90">
    <property type="development level" value="Tbio"/>
</dbReference>
<dbReference type="PRO" id="PR:Q8NB90"/>
<dbReference type="Proteomes" id="UP000005640">
    <property type="component" value="Chromosome 4"/>
</dbReference>
<dbReference type="RNAct" id="Q8NB90">
    <property type="molecule type" value="protein"/>
</dbReference>
<dbReference type="Bgee" id="ENSG00000145375">
    <property type="expression patterns" value="Expressed in tendon of biceps brachii and 149 other cell types or tissues"/>
</dbReference>
<dbReference type="ExpressionAtlas" id="Q8NB90">
    <property type="expression patterns" value="baseline and differential"/>
</dbReference>
<dbReference type="GO" id="GO:0005737">
    <property type="term" value="C:cytoplasm"/>
    <property type="evidence" value="ECO:0000314"/>
    <property type="project" value="UniProtKB"/>
</dbReference>
<dbReference type="GO" id="GO:0005829">
    <property type="term" value="C:cytosol"/>
    <property type="evidence" value="ECO:0000314"/>
    <property type="project" value="FlyBase"/>
</dbReference>
<dbReference type="GO" id="GO:0005819">
    <property type="term" value="C:spindle"/>
    <property type="evidence" value="ECO:0000314"/>
    <property type="project" value="UniProtKB"/>
</dbReference>
<dbReference type="GO" id="GO:0005524">
    <property type="term" value="F:ATP binding"/>
    <property type="evidence" value="ECO:0007669"/>
    <property type="project" value="UniProtKB-KW"/>
</dbReference>
<dbReference type="GO" id="GO:0016887">
    <property type="term" value="F:ATP hydrolysis activity"/>
    <property type="evidence" value="ECO:0000318"/>
    <property type="project" value="GO_Central"/>
</dbReference>
<dbReference type="GO" id="GO:1990275">
    <property type="term" value="F:preribosome binding"/>
    <property type="evidence" value="ECO:0000314"/>
    <property type="project" value="UniProtKB"/>
</dbReference>
<dbReference type="GO" id="GO:0007420">
    <property type="term" value="P:brain development"/>
    <property type="evidence" value="ECO:0000315"/>
    <property type="project" value="UniProtKB"/>
</dbReference>
<dbReference type="GO" id="GO:0030154">
    <property type="term" value="P:cell differentiation"/>
    <property type="evidence" value="ECO:0007669"/>
    <property type="project" value="UniProtKB-KW"/>
</dbReference>
<dbReference type="GO" id="GO:0042273">
    <property type="term" value="P:ribosomal large subunit biogenesis"/>
    <property type="evidence" value="ECO:0000314"/>
    <property type="project" value="UniProtKB"/>
</dbReference>
<dbReference type="GO" id="GO:0007283">
    <property type="term" value="P:spermatogenesis"/>
    <property type="evidence" value="ECO:0007669"/>
    <property type="project" value="UniProtKB-KW"/>
</dbReference>
<dbReference type="CDD" id="cd19503">
    <property type="entry name" value="RecA-like_CDC48_NLV2_r1-like"/>
    <property type="match status" value="1"/>
</dbReference>
<dbReference type="CDD" id="cd19511">
    <property type="entry name" value="RecA-like_CDC48_r2-like"/>
    <property type="match status" value="1"/>
</dbReference>
<dbReference type="FunFam" id="3.40.50.300:FF:000567">
    <property type="entry name" value="ATPase, AAA family protein"/>
    <property type="match status" value="1"/>
</dbReference>
<dbReference type="FunFam" id="1.10.8.60:FF:000068">
    <property type="entry name" value="spermatogenesis-associated protein 5 isoform X1"/>
    <property type="match status" value="1"/>
</dbReference>
<dbReference type="FunFam" id="1.10.8.60:FF:000069">
    <property type="entry name" value="spermatogenesis-associated protein 5 isoform X1"/>
    <property type="match status" value="1"/>
</dbReference>
<dbReference type="FunFam" id="2.40.40.20:FF:000015">
    <property type="entry name" value="spermatogenesis-associated protein 5 isoform X2"/>
    <property type="match status" value="1"/>
</dbReference>
<dbReference type="FunFam" id="3.40.50.300:FF:000012">
    <property type="entry name" value="Transitional endoplasmic reticulum ATPase"/>
    <property type="match status" value="1"/>
</dbReference>
<dbReference type="Gene3D" id="1.10.8.60">
    <property type="match status" value="2"/>
</dbReference>
<dbReference type="Gene3D" id="2.40.40.20">
    <property type="match status" value="1"/>
</dbReference>
<dbReference type="Gene3D" id="3.40.50.300">
    <property type="entry name" value="P-loop containing nucleotide triphosphate hydrolases"/>
    <property type="match status" value="2"/>
</dbReference>
<dbReference type="InterPro" id="IPR003593">
    <property type="entry name" value="AAA+_ATPase"/>
</dbReference>
<dbReference type="InterPro" id="IPR050168">
    <property type="entry name" value="AAA_ATPase_domain"/>
</dbReference>
<dbReference type="InterPro" id="IPR041569">
    <property type="entry name" value="AAA_lid_3"/>
</dbReference>
<dbReference type="InterPro" id="IPR009010">
    <property type="entry name" value="Asp_de-COase-like_dom_sf"/>
</dbReference>
<dbReference type="InterPro" id="IPR003959">
    <property type="entry name" value="ATPase_AAA_core"/>
</dbReference>
<dbReference type="InterPro" id="IPR003960">
    <property type="entry name" value="ATPase_AAA_CS"/>
</dbReference>
<dbReference type="InterPro" id="IPR027417">
    <property type="entry name" value="P-loop_NTPase"/>
</dbReference>
<dbReference type="PANTHER" id="PTHR23077">
    <property type="entry name" value="AAA-FAMILY ATPASE"/>
    <property type="match status" value="1"/>
</dbReference>
<dbReference type="PANTHER" id="PTHR23077:SF27">
    <property type="entry name" value="ATPASE FAMILY GENE 2 PROTEIN HOMOLOG A"/>
    <property type="match status" value="1"/>
</dbReference>
<dbReference type="Pfam" id="PF00004">
    <property type="entry name" value="AAA"/>
    <property type="match status" value="2"/>
</dbReference>
<dbReference type="Pfam" id="PF17862">
    <property type="entry name" value="AAA_lid_3"/>
    <property type="match status" value="2"/>
</dbReference>
<dbReference type="SMART" id="SM00382">
    <property type="entry name" value="AAA"/>
    <property type="match status" value="2"/>
</dbReference>
<dbReference type="SUPFAM" id="SSF50692">
    <property type="entry name" value="ADC-like"/>
    <property type="match status" value="1"/>
</dbReference>
<dbReference type="SUPFAM" id="SSF52540">
    <property type="entry name" value="P-loop containing nucleoside triphosphate hydrolases"/>
    <property type="match status" value="2"/>
</dbReference>
<dbReference type="PROSITE" id="PS00674">
    <property type="entry name" value="AAA"/>
    <property type="match status" value="2"/>
</dbReference>
<protein>
    <recommendedName>
        <fullName evidence="15">ATPase family gene 2 protein homolog A</fullName>
        <ecNumber evidence="1">3.6.4.10</ecNumber>
    </recommendedName>
    <alternativeName>
        <fullName evidence="16">AFG2 AAA ATPase homolog A</fullName>
    </alternativeName>
    <alternativeName>
        <fullName evidence="15">Ribosome biogenesis protein SPATA5</fullName>
    </alternativeName>
    <alternativeName>
        <fullName evidence="13">Spermatogenesis-associated factor protein</fullName>
    </alternativeName>
    <alternativeName>
        <fullName evidence="15">Spermatogenesis-associated protein 5</fullName>
    </alternativeName>
</protein>
<sequence>MSSKKNRKRLNQSAENGSSLPSAASSCAEARAPSAGSDFAATSGTLTVTNLLEKVDDKIPKTFQNSLIHLGLNTMKSANICIGRPVLLTSLNGKQEVYTAWPMAGFPGGKVGLSEMAQKNVGVRPGDAIQVQPLVGAVLQAEEMDVALSDKDMEINEEELTGCILRKLDGKIVLPGNFLYCTFYGRPYKLQVLRVKGADGMILGGPQSDSDTDAQRMAFEQSSMETSSLELSLQLSQLDLEDTQIPTSRSTPYKPIDDRITNKASDVLLDVTQSPGDGSGLMLEEVTGLKCNFESAREGNEQLTEEERLLKFSIGAKCNTDTFYFISSTTRVNFTEIDKNSKEQDNQFKVTYDMIGGLSSQLKAIREIIELPLKQPELFKSYGIPAPRGVLLYGPPGTGKTMIARAVANEVGAYVSVINGPEIISKFYGETEAKLRQIFAEATLRHPSIIFIDELDALCPKREGAQNEVEKRVVASLLTLMDGIGSEVSEGQVLVLGATNRPHALDAALRRPGRFDKEIEIGVPNAQDRLDILQKLLRRVPHLLTEAELLQLANSAHGYVGADLKVLCNEAGLCALRRILKKQPNLPDVKVAGLVKITLKDFLQAMNDIRPSAMREIAIDVPNVSWSDIGGLESIKLKLEQAVEWPLKHPESFIRMGIQPPKGVLLYGPPGCSKTMIAKALANESGLNFLAIKGPELMNKYVGESERAVRETFRKARAVAPSIIFFDELDALAVERGSSLGAGNVADRVLAQLLTEMDGIEQLKDVTILAATNRPDRIDKALMRPGRIDRIIYVPLPDAATRREIFKLQFHSMPVSNEVDLDELILQTDAYSGAEIVAVCREAALLALEEDIQANLIMKRHFTQALSTVTPRIPESLRRFYEDYQEKSGLHTL</sequence>
<name>AFG2A_HUMAN</name>
<accession>Q8NB90</accession>
<accession>C9JT97</accession>
<accession>Q86XW1</accession>
<accession>Q8NI20</accession>
<accession>Q8TDL7</accession>
<comment type="function">
    <text evidence="2 9 10">ATP-dependent chaperone part of the 55LCC heterohexameric ATPase complex which is chromatin-associated and promotes replisome proteostasis to maintain replication fork progression and genome stability. Required for replication fork progression, sister chromatid cohesion, and chromosome stability. The ATPase activity is specifically enhanced by replication fork DNA and is coupled to cysteine protease-dependent cleavage of replisome substrates in response to replication fork damage. Uses ATPase activity to process replisome substrates in S-phase, facilitating their proteolytic turnover from chromatin to ensure DNA replication and mitotic fidelity (PubMed:38554706). Plays an essential role in the cytoplasmic maturation steps of pre-60S ribosomal particles by promoting the release of shuttling protein RSL24D1/RLP24 from the pre-ribosomal particles (PubMed:35354024, PubMed:38554706). May be involved in morphological and functional mitochondrial transformations during spermatogenesis (By similarity).</text>
</comment>
<comment type="catalytic activity">
    <reaction evidence="10">
        <text>ATP + H2O = ADP + phosphate + H(+)</text>
        <dbReference type="Rhea" id="RHEA:13065"/>
        <dbReference type="ChEBI" id="CHEBI:15377"/>
        <dbReference type="ChEBI" id="CHEBI:15378"/>
        <dbReference type="ChEBI" id="CHEBI:30616"/>
        <dbReference type="ChEBI" id="CHEBI:43474"/>
        <dbReference type="ChEBI" id="CHEBI:456216"/>
        <dbReference type="EC" id="3.6.4.10"/>
    </reaction>
    <physiologicalReaction direction="left-to-right" evidence="10">
        <dbReference type="Rhea" id="RHEA:13066"/>
    </physiologicalReaction>
</comment>
<comment type="activity regulation">
    <text evidence="10">AFG2A alone display limited ATPase activity and is not regulated by RNA or DNA binding. In the context of 55LCC heterohexameric ATPase complex, the ATPase activity increases and is stimulated by DNA binding and inhibited in presence of RNA.</text>
</comment>
<comment type="subunit">
    <text evidence="9 10">Part of the 55LCC heterohexameric ATPase complex composed at least of AIRIM, AFG2A, AFG2B and CINP (PubMed:35354024, PubMed:38554706). Associates with pre-60S ribosomal particles (PubMed:35354024).</text>
</comment>
<comment type="interaction">
    <interactant intactId="EBI-3184062">
        <id>Q8NB90</id>
    </interactant>
    <interactant intactId="EBI-7950854">
        <id>Q9BVQ7</id>
        <label>AFG2B</label>
    </interactant>
    <organismsDiffer>false</organismsDiffer>
    <experiments>13</experiments>
</comment>
<comment type="subcellular location">
    <subcellularLocation>
        <location evidence="4">Cytoplasm</location>
    </subcellularLocation>
    <subcellularLocation>
        <location evidence="2">Mitochondrion</location>
    </subcellularLocation>
    <subcellularLocation>
        <location evidence="4">Cytoplasm</location>
        <location evidence="4">Cytoskeleton</location>
        <location evidence="4">Spindle</location>
    </subcellularLocation>
</comment>
<comment type="alternative products">
    <event type="alternative splicing"/>
    <isoform>
        <id>Q8NB90-1</id>
        <name>1</name>
        <sequence type="displayed"/>
    </isoform>
    <isoform>
        <id>Q8NB90-2</id>
        <name>2</name>
        <sequence type="described" ref="VSP_033048 VSP_033049"/>
    </isoform>
    <isoform>
        <id>Q8NB90-3</id>
        <name>3</name>
        <sequence type="described" ref="VSP_033046 VSP_033047"/>
    </isoform>
</comment>
<comment type="domain">
    <text evidence="1">The first ATP-binding region binds ATP with low affinity whereas the second ATP-binding region binds ATP with high affinity.</text>
</comment>
<comment type="disease" evidence="5 6 7 8 9 10">
    <disease id="DI-04554">
        <name>Neurodevelopmental disorder with hearing loss, seizures, and brain abnormalities</name>
        <acronym>NEDHSB</acronym>
        <description>An autosomal recessive disorder characterized by intellectual disability, intractable epilepsy, microcephaly, abnormal muscle tone, and sensorineural hearing loss.</description>
        <dbReference type="MIM" id="616577"/>
    </disease>
    <text>The disease is caused by variants affecting the gene represented in this entry.</text>
</comment>
<comment type="similarity">
    <text evidence="15">Belongs to the AAA ATPase family. AFG2 subfamily.</text>
</comment>
<gene>
    <name evidence="16" type="primary">AFG2A</name>
    <name evidence="13" type="synonym">SPAF</name>
    <name evidence="12" type="synonym">SPATA5</name>
</gene>
<feature type="chain" id="PRO_0000330583" description="ATPase family gene 2 protein homolog A">
    <location>
        <begin position="1"/>
        <end position="893"/>
    </location>
</feature>
<feature type="region of interest" description="Required for interaction with AFG2B and CINP" evidence="10">
    <location>
        <begin position="1"/>
        <end position="237"/>
    </location>
</feature>
<feature type="region of interest" description="Disordered" evidence="3">
    <location>
        <begin position="1"/>
        <end position="26"/>
    </location>
</feature>
<feature type="compositionally biased region" description="Basic residues" evidence="3">
    <location>
        <begin position="1"/>
        <end position="10"/>
    </location>
</feature>
<feature type="compositionally biased region" description="Polar residues" evidence="3">
    <location>
        <begin position="11"/>
        <end position="25"/>
    </location>
</feature>
<feature type="binding site" evidence="1">
    <location>
        <begin position="394"/>
        <end position="401"/>
    </location>
    <ligand>
        <name>ATP</name>
        <dbReference type="ChEBI" id="CHEBI:30616"/>
        <label>1</label>
    </ligand>
</feature>
<feature type="binding site" evidence="1">
    <location>
        <begin position="668"/>
        <end position="675"/>
    </location>
    <ligand>
        <name>ATP</name>
        <dbReference type="ChEBI" id="CHEBI:30616"/>
        <label>2</label>
    </ligand>
</feature>
<feature type="modified residue" description="Phosphothreonine" evidence="17">
    <location>
        <position position="272"/>
    </location>
</feature>
<feature type="modified residue" description="Phosphoserine" evidence="17">
    <location>
        <position position="274"/>
    </location>
</feature>
<feature type="modified residue" description="Phosphoserine" evidence="17">
    <location>
        <position position="279"/>
    </location>
</feature>
<feature type="cross-link" description="Glycyl lysine isopeptide (Lys-Gly) (interchain with G-Cter in SUMO2)" evidence="18">
    <location>
        <position position="859"/>
    </location>
</feature>
<feature type="splice variant" id="VSP_033046" description="In isoform 3." evidence="11">
    <original>GPE</original>
    <variation>VGC</variation>
    <location>
        <begin position="694"/>
        <end position="696"/>
    </location>
</feature>
<feature type="splice variant" id="VSP_033047" description="In isoform 3." evidence="11">
    <location>
        <begin position="697"/>
        <end position="893"/>
    </location>
</feature>
<feature type="splice variant" id="VSP_033048" description="In isoform 2." evidence="14">
    <original>ALMRPGRIDR</original>
    <variation>VPPSQTFLLL</variation>
    <location>
        <begin position="781"/>
        <end position="790"/>
    </location>
</feature>
<feature type="splice variant" id="VSP_033049" description="In isoform 2." evidence="14">
    <location>
        <begin position="791"/>
        <end position="893"/>
    </location>
</feature>
<feature type="sequence variant" id="VAR_042703" description="In dbSNP:rs35430470.">
    <original>C</original>
    <variation>S</variation>
    <location>
        <position position="27"/>
    </location>
</feature>
<feature type="sequence variant" id="VAR_075775" description="In NEDHSB; dbSNP:rs745858366." evidence="5">
    <original>R</original>
    <variation>Q</variation>
    <location>
        <position position="84"/>
    </location>
</feature>
<feature type="sequence variant" id="VAR_075776" description="In NEDHSB; dbSNP:rs796051893." evidence="5">
    <original>S</original>
    <variation>I</variation>
    <location>
        <position position="90"/>
    </location>
</feature>
<feature type="sequence variant" id="VAR_075777" description="In NEDHSB; decreased protein stability; no effect on interaction with AFG2B and CINP; affects cell viability; dbSNP:rs796051895." evidence="5 10">
    <original>A</original>
    <variation>T</variation>
    <location>
        <position position="100"/>
    </location>
</feature>
<feature type="sequence variant" id="VAR_086543" description="In NEDHSB." evidence="8">
    <location>
        <begin position="132"/>
        <end position="893"/>
    </location>
</feature>
<feature type="sequence variant" id="VAR_075778" description="In NEDHSB; impaired maturation of pre-60S ribosome; decreased protein stability; decreases interaction with AFG2B and CINP; affects cell viability." evidence="5 7 8 9 10">
    <location>
        <position position="330"/>
    </location>
</feature>
<feature type="sequence variant" id="VAR_075779" description="In NEDHSB; dbSNP:rs766034355." evidence="5">
    <original>S</original>
    <variation>L</variation>
    <location>
        <position position="448"/>
    </location>
</feature>
<feature type="sequence variant" id="VAR_075780" description="In NEDHSB." evidence="5">
    <original>V</original>
    <variation>L</variation>
    <location>
        <position position="488"/>
    </location>
</feature>
<feature type="sequence variant" id="VAR_075781" description="In NEDHSB; decreased protein stability; no effect on interaction with AFG2B and CINP; affects cell viability; dbSNP:rs567175477." evidence="5 10">
    <original>R</original>
    <variation>Q</variation>
    <location>
        <position position="529"/>
    </location>
</feature>
<feature type="sequence variant" id="VAR_075782" description="In NEDHSB; decreased protein stability; no effect on interaction with AFG2B and CINP; affects cell viability; dbSNP:rs1553969639." evidence="5 10">
    <original>W</original>
    <variation>C</variation>
    <location>
        <position position="626"/>
    </location>
</feature>
<feature type="sequence variant" id="VAR_075783" description="In NEDHSB; impaired maturation of pre-60S ribosome; dbSNP:rs768528444." evidence="5 9">
    <original>D</original>
    <variation>G</variation>
    <location>
        <position position="628"/>
    </location>
</feature>
<feature type="sequence variant" id="VAR_042704" description="In dbSNP:rs35133326.">
    <original>S</original>
    <variation>Y</variation>
    <location>
        <position position="673"/>
    </location>
</feature>
<feature type="sequence variant" id="VAR_075784" description="In NEDHSB; decreased protein stability; no effect on interaction with AFG2B and CINP; affects cell viability; dbSNP:rs796051894." evidence="5 10">
    <original>R</original>
    <variation>Q</variation>
    <location>
        <position position="784"/>
    </location>
</feature>
<feature type="sequence variant" id="VAR_075785" description="In NEDHSB; dbSNP:rs796051892." evidence="5">
    <original>A</original>
    <variation>V</variation>
    <location>
        <position position="844"/>
    </location>
</feature>
<feature type="mutagenesis site" description="No effect on protein stability. No effect on interaction with AFG2B." evidence="10">
    <original>G</original>
    <variation>E</variation>
    <location>
        <position position="185"/>
    </location>
</feature>
<feature type="mutagenesis site" description="Reduces protein stability." evidence="10">
    <original>F</original>
    <variation>I</variation>
    <location>
        <position position="323"/>
    </location>
</feature>
<feature type="sequence conflict" description="In Ref. 5; AAH48217." evidence="15" ref="5">
    <location>
        <position position="55"/>
    </location>
</feature>
<feature type="sequence conflict" description="In Ref. 1; AAM00262." evidence="15" ref="1">
    <original>S</original>
    <variation>P</variation>
    <location>
        <position position="66"/>
    </location>
</feature>
<feature type="sequence conflict" description="In Ref. 1; AAM00262." evidence="15" ref="1">
    <original>S</original>
    <variation>P</variation>
    <location>
        <position position="210"/>
    </location>
</feature>
<feature type="sequence conflict" description="In Ref. 3; BAC03651." evidence="15" ref="3">
    <original>C</original>
    <variation>Y</variation>
    <location>
        <position position="568"/>
    </location>
</feature>
<feature type="sequence conflict" description="In Ref. 1; AAM00262." evidence="15" ref="1">
    <original>L</original>
    <variation>F</variation>
    <location>
        <position position="603"/>
    </location>
</feature>
<feature type="sequence conflict" description="In Ref. 3; BAC03651." evidence="15" ref="3">
    <original>M</original>
    <variation>T</variation>
    <location>
        <position position="614"/>
    </location>
</feature>
<feature type="sequence conflict" description="In Ref. 2; AAM43608." evidence="15" ref="2">
    <original>P</original>
    <variation>S</variation>
    <location>
        <position position="695"/>
    </location>
</feature>
<feature type="sequence conflict" description="In Ref. 1; AAM00262." evidence="15" ref="1">
    <original>D</original>
    <variation>G</variation>
    <location>
        <position position="851"/>
    </location>
</feature>
<feature type="sequence conflict" description="In Ref. 1; AAM00262." evidence="15" ref="1">
    <original>H</original>
    <variation>R</variation>
    <location>
        <position position="891"/>
    </location>
</feature>
<evidence type="ECO:0000250" key="1">
    <source>
        <dbReference type="UniProtKB" id="P32794"/>
    </source>
</evidence>
<evidence type="ECO:0000250" key="2">
    <source>
        <dbReference type="UniProtKB" id="Q3UMC0"/>
    </source>
</evidence>
<evidence type="ECO:0000256" key="3">
    <source>
        <dbReference type="SAM" id="MobiDB-lite"/>
    </source>
</evidence>
<evidence type="ECO:0000269" key="4">
    <source>
    </source>
</evidence>
<evidence type="ECO:0000269" key="5">
    <source>
    </source>
</evidence>
<evidence type="ECO:0000269" key="6">
    <source>
    </source>
</evidence>
<evidence type="ECO:0000269" key="7">
    <source>
    </source>
</evidence>
<evidence type="ECO:0000269" key="8">
    <source>
    </source>
</evidence>
<evidence type="ECO:0000269" key="9">
    <source>
    </source>
</evidence>
<evidence type="ECO:0000269" key="10">
    <source>
    </source>
</evidence>
<evidence type="ECO:0000303" key="11">
    <source>
    </source>
</evidence>
<evidence type="ECO:0000303" key="12">
    <source>
    </source>
</evidence>
<evidence type="ECO:0000303" key="13">
    <source ref="1"/>
</evidence>
<evidence type="ECO:0000303" key="14">
    <source ref="2"/>
</evidence>
<evidence type="ECO:0000305" key="15"/>
<evidence type="ECO:0000312" key="16">
    <source>
        <dbReference type="HGNC" id="HGNC:18119"/>
    </source>
</evidence>
<evidence type="ECO:0007744" key="17">
    <source>
    </source>
</evidence>
<evidence type="ECO:0007744" key="18">
    <source>
    </source>
</evidence>